<accession>P9WP37</accession>
<accession>L0TAG7</accession>
<accession>P63885</accession>
<accession>Q10388</accession>
<dbReference type="EC" id="7.1.1.8" evidence="7"/>
<dbReference type="EMBL" id="AL123456">
    <property type="protein sequence ID" value="CCP44973.1"/>
    <property type="molecule type" value="Genomic_DNA"/>
</dbReference>
<dbReference type="PIR" id="E70784">
    <property type="entry name" value="E70784"/>
</dbReference>
<dbReference type="RefSeq" id="NP_216712.1">
    <property type="nucleotide sequence ID" value="NC_000962.3"/>
</dbReference>
<dbReference type="RefSeq" id="WP_003899212.1">
    <property type="nucleotide sequence ID" value="NZ_NVQJ01000008.1"/>
</dbReference>
<dbReference type="PDB" id="7E1V">
    <property type="method" value="EM"/>
    <property type="resolution" value="2.68 A"/>
    <property type="chains" value="B/N=1-549"/>
</dbReference>
<dbReference type="PDB" id="7E1W">
    <property type="method" value="EM"/>
    <property type="resolution" value="2.67 A"/>
    <property type="chains" value="B/N=1-549"/>
</dbReference>
<dbReference type="PDB" id="7E1X">
    <property type="method" value="EM"/>
    <property type="resolution" value="2.93 A"/>
    <property type="chains" value="B/N=1-549"/>
</dbReference>
<dbReference type="PDB" id="8HCR">
    <property type="method" value="EM"/>
    <property type="chains" value="B/N=1-549"/>
</dbReference>
<dbReference type="PDBsum" id="7E1V"/>
<dbReference type="PDBsum" id="7E1W"/>
<dbReference type="PDBsum" id="7E1X"/>
<dbReference type="PDBsum" id="8HCR"/>
<dbReference type="EMDB" id="EMD-30943"/>
<dbReference type="EMDB" id="EMD-30944"/>
<dbReference type="EMDB" id="EMD-30945"/>
<dbReference type="SMR" id="P9WP37"/>
<dbReference type="FunCoup" id="P9WP37">
    <property type="interactions" value="47"/>
</dbReference>
<dbReference type="STRING" id="83332.Rv2196"/>
<dbReference type="ChEMBL" id="CHEMBL4295794"/>
<dbReference type="PaxDb" id="83332-Rv2196"/>
<dbReference type="DNASU" id="887400"/>
<dbReference type="GeneID" id="887400"/>
<dbReference type="KEGG" id="mtu:Rv2196"/>
<dbReference type="KEGG" id="mtv:RVBD_2196"/>
<dbReference type="TubercuList" id="Rv2196"/>
<dbReference type="eggNOG" id="COG1290">
    <property type="taxonomic scope" value="Bacteria"/>
</dbReference>
<dbReference type="InParanoid" id="P9WP37"/>
<dbReference type="OrthoDB" id="9804503at2"/>
<dbReference type="PhylomeDB" id="P9WP37"/>
<dbReference type="Proteomes" id="UP000001584">
    <property type="component" value="Chromosome"/>
</dbReference>
<dbReference type="GO" id="GO:0016020">
    <property type="term" value="C:membrane"/>
    <property type="evidence" value="ECO:0000318"/>
    <property type="project" value="GO_Central"/>
</dbReference>
<dbReference type="GO" id="GO:0005886">
    <property type="term" value="C:plasma membrane"/>
    <property type="evidence" value="ECO:0007005"/>
    <property type="project" value="MTBBASE"/>
</dbReference>
<dbReference type="GO" id="GO:0046872">
    <property type="term" value="F:metal ion binding"/>
    <property type="evidence" value="ECO:0007669"/>
    <property type="project" value="UniProtKB-KW"/>
</dbReference>
<dbReference type="GO" id="GO:0008121">
    <property type="term" value="F:ubiquinol-cytochrome-c reductase activity"/>
    <property type="evidence" value="ECO:0007669"/>
    <property type="project" value="UniProtKB-EC"/>
</dbReference>
<dbReference type="GO" id="GO:0022904">
    <property type="term" value="P:respiratory electron transport chain"/>
    <property type="evidence" value="ECO:0007669"/>
    <property type="project" value="InterPro"/>
</dbReference>
<dbReference type="FunFam" id="1.20.810.10:FF:000007">
    <property type="entry name" value="Ubiquinol-cytochrome C reductase B subunit"/>
    <property type="match status" value="1"/>
</dbReference>
<dbReference type="Gene3D" id="1.20.810.10">
    <property type="entry name" value="Cytochrome Bc1 Complex, Chain C"/>
    <property type="match status" value="1"/>
</dbReference>
<dbReference type="InterPro" id="IPR005797">
    <property type="entry name" value="Cyt_b/b6_N"/>
</dbReference>
<dbReference type="InterPro" id="IPR027387">
    <property type="entry name" value="Cytb/b6-like_sf"/>
</dbReference>
<dbReference type="InterPro" id="IPR016174">
    <property type="entry name" value="Di-haem_cyt_TM"/>
</dbReference>
<dbReference type="PANTHER" id="PTHR19271">
    <property type="entry name" value="CYTOCHROME B"/>
    <property type="match status" value="1"/>
</dbReference>
<dbReference type="PANTHER" id="PTHR19271:SF16">
    <property type="entry name" value="CYTOCHROME B"/>
    <property type="match status" value="1"/>
</dbReference>
<dbReference type="Pfam" id="PF13631">
    <property type="entry name" value="Cytochrom_B_N_2"/>
    <property type="match status" value="1"/>
</dbReference>
<dbReference type="SUPFAM" id="SSF81342">
    <property type="entry name" value="Transmembrane di-heme cytochromes"/>
    <property type="match status" value="1"/>
</dbReference>
<dbReference type="PROSITE" id="PS51002">
    <property type="entry name" value="CYTB_NTER"/>
    <property type="match status" value="1"/>
</dbReference>
<gene>
    <name type="primary">qcrB</name>
    <name type="ordered locus">Rv2196</name>
    <name type="ORF">MTCY190.07</name>
</gene>
<protein>
    <recommendedName>
        <fullName>Cytochrome bc1 complex cytochrome b subunit</fullName>
        <ecNumber evidence="7">7.1.1.8</ecNumber>
    </recommendedName>
    <alternativeName>
        <fullName>Cytochrome bc1 reductase complex subunit QcrB</fullName>
    </alternativeName>
    <alternativeName>
        <fullName>Ubiquinol--cytochrome c reductase cytochrome b subunit</fullName>
    </alternativeName>
</protein>
<feature type="chain" id="PRO_0000061927" description="Cytochrome bc1 complex cytochrome b subunit">
    <location>
        <begin position="1"/>
        <end position="549"/>
    </location>
</feature>
<feature type="transmembrane region" description="Helical" evidence="3">
    <location>
        <begin position="45"/>
        <end position="65"/>
    </location>
</feature>
<feature type="transmembrane region" description="Helical" evidence="3">
    <location>
        <begin position="118"/>
        <end position="138"/>
    </location>
</feature>
<feature type="transmembrane region" description="Helical" evidence="3">
    <location>
        <begin position="146"/>
        <end position="166"/>
    </location>
</feature>
<feature type="transmembrane region" description="Helical" evidence="3">
    <location>
        <begin position="189"/>
        <end position="209"/>
    </location>
</feature>
<feature type="transmembrane region" description="Helical" evidence="3">
    <location>
        <begin position="217"/>
        <end position="237"/>
    </location>
</feature>
<feature type="transmembrane region" description="Helical" evidence="3">
    <location>
        <begin position="266"/>
        <end position="286"/>
    </location>
</feature>
<feature type="transmembrane region" description="Helical" evidence="3">
    <location>
        <begin position="335"/>
        <end position="355"/>
    </location>
</feature>
<feature type="transmembrane region" description="Helical" evidence="3">
    <location>
        <begin position="381"/>
        <end position="401"/>
    </location>
</feature>
<feature type="transmembrane region" description="Helical" evidence="3">
    <location>
        <begin position="418"/>
        <end position="438"/>
    </location>
</feature>
<feature type="binding site" description="axial binding residue" evidence="3">
    <location>
        <position position="114"/>
    </location>
    <ligand>
        <name>heme</name>
        <dbReference type="ChEBI" id="CHEBI:30413"/>
        <label>1</label>
    </ligand>
    <ligandPart>
        <name>Fe</name>
        <dbReference type="ChEBI" id="CHEBI:18248"/>
    </ligandPart>
</feature>
<feature type="binding site" description="axial binding residue" evidence="3">
    <location>
        <position position="128"/>
    </location>
    <ligand>
        <name>heme</name>
        <dbReference type="ChEBI" id="CHEBI:30413"/>
        <label>2</label>
    </ligand>
    <ligandPart>
        <name>Fe</name>
        <dbReference type="ChEBI" id="CHEBI:18248"/>
    </ligandPart>
</feature>
<feature type="binding site" description="axial binding residue" evidence="3">
    <location>
        <position position="216"/>
    </location>
    <ligand>
        <name>heme</name>
        <dbReference type="ChEBI" id="CHEBI:30413"/>
        <label>1</label>
    </ligand>
    <ligandPart>
        <name>Fe</name>
        <dbReference type="ChEBI" id="CHEBI:18248"/>
    </ligandPart>
</feature>
<feature type="binding site" description="axial binding residue" evidence="3">
    <location>
        <position position="231"/>
    </location>
    <ligand>
        <name>heme</name>
        <dbReference type="ChEBI" id="CHEBI:30413"/>
        <label>2</label>
    </ligand>
    <ligandPart>
        <name>Fe</name>
        <dbReference type="ChEBI" id="CHEBI:18248"/>
    </ligandPart>
</feature>
<feature type="mutagenesis site" description="Confers resistance to LPZS. Remains susceptible to IPA." evidence="5">
    <original>L</original>
    <variation>P</variation>
    <location>
        <position position="176"/>
    </location>
</feature>
<feature type="mutagenesis site" description="Confers resistance to Q203 and IPA. Remains susceptible to LPZS." evidence="4 5">
    <original>T</original>
    <variation>A</variation>
    <location>
        <position position="313"/>
    </location>
</feature>
<feature type="helix" evidence="11">
    <location>
        <begin position="15"/>
        <end position="25"/>
    </location>
</feature>
<feature type="helix" evidence="11">
    <location>
        <begin position="30"/>
        <end position="35"/>
    </location>
</feature>
<feature type="helix" evidence="11">
    <location>
        <begin position="43"/>
        <end position="46"/>
    </location>
</feature>
<feature type="helix" evidence="11">
    <location>
        <begin position="47"/>
        <end position="65"/>
    </location>
</feature>
<feature type="turn" evidence="11">
    <location>
        <begin position="66"/>
        <end position="68"/>
    </location>
</feature>
<feature type="strand" evidence="11">
    <location>
        <begin position="75"/>
        <end position="77"/>
    </location>
</feature>
<feature type="helix" evidence="11">
    <location>
        <begin position="83"/>
        <end position="85"/>
    </location>
</feature>
<feature type="strand" evidence="11">
    <location>
        <begin position="89"/>
        <end position="91"/>
    </location>
</feature>
<feature type="helix" evidence="11">
    <location>
        <begin position="92"/>
        <end position="103"/>
    </location>
</feature>
<feature type="helix" evidence="11">
    <location>
        <begin position="107"/>
        <end position="135"/>
    </location>
</feature>
<feature type="turn" evidence="11">
    <location>
        <begin position="136"/>
        <end position="138"/>
    </location>
</feature>
<feature type="helix" evidence="11">
    <location>
        <begin position="140"/>
        <end position="142"/>
    </location>
</feature>
<feature type="helix" evidence="11">
    <location>
        <begin position="143"/>
        <end position="164"/>
    </location>
</feature>
<feature type="helix" evidence="11">
    <location>
        <begin position="170"/>
        <end position="184"/>
    </location>
</feature>
<feature type="strand" evidence="11">
    <location>
        <begin position="187"/>
        <end position="190"/>
    </location>
</feature>
<feature type="helix" evidence="11">
    <location>
        <begin position="192"/>
        <end position="199"/>
    </location>
</feature>
<feature type="strand" evidence="11">
    <location>
        <begin position="200"/>
        <end position="204"/>
    </location>
</feature>
<feature type="helix" evidence="11">
    <location>
        <begin position="208"/>
        <end position="217"/>
    </location>
</feature>
<feature type="helix" evidence="11">
    <location>
        <begin position="219"/>
        <end position="237"/>
    </location>
</feature>
<feature type="strand" evidence="11">
    <location>
        <begin position="254"/>
        <end position="257"/>
    </location>
</feature>
<feature type="helix" evidence="11">
    <location>
        <begin position="258"/>
        <end position="283"/>
    </location>
</feature>
<feature type="turn" evidence="11">
    <location>
        <begin position="289"/>
        <end position="291"/>
    </location>
</feature>
<feature type="turn" evidence="11">
    <location>
        <begin position="308"/>
        <end position="310"/>
    </location>
</feature>
<feature type="helix" evidence="11">
    <location>
        <begin position="311"/>
        <end position="318"/>
    </location>
</feature>
<feature type="strand" evidence="10">
    <location>
        <begin position="325"/>
        <end position="327"/>
    </location>
</feature>
<feature type="strand" evidence="10">
    <location>
        <begin position="330"/>
        <end position="332"/>
    </location>
</feature>
<feature type="helix" evidence="11">
    <location>
        <begin position="335"/>
        <end position="348"/>
    </location>
</feature>
<feature type="turn" evidence="11">
    <location>
        <begin position="349"/>
        <end position="351"/>
    </location>
</feature>
<feature type="helix" evidence="11">
    <location>
        <begin position="352"/>
        <end position="360"/>
    </location>
</feature>
<feature type="turn" evidence="11">
    <location>
        <begin position="372"/>
        <end position="374"/>
    </location>
</feature>
<feature type="helix" evidence="11">
    <location>
        <begin position="376"/>
        <end position="394"/>
    </location>
</feature>
<feature type="helix" evidence="11">
    <location>
        <begin position="398"/>
        <end position="404"/>
    </location>
</feature>
<feature type="helix" evidence="11">
    <location>
        <begin position="409"/>
        <end position="447"/>
    </location>
</feature>
<feature type="strand" evidence="11">
    <location>
        <begin position="454"/>
        <end position="456"/>
    </location>
</feature>
<feature type="turn" evidence="11">
    <location>
        <begin position="458"/>
        <end position="461"/>
    </location>
</feature>
<feature type="strand" evidence="12">
    <location>
        <begin position="477"/>
        <end position="479"/>
    </location>
</feature>
<feature type="turn" evidence="11">
    <location>
        <begin position="493"/>
        <end position="495"/>
    </location>
</feature>
<feature type="strand" evidence="11">
    <location>
        <begin position="496"/>
        <end position="499"/>
    </location>
</feature>
<feature type="strand" evidence="11">
    <location>
        <begin position="505"/>
        <end position="509"/>
    </location>
</feature>
<feature type="helix" evidence="11">
    <location>
        <begin position="513"/>
        <end position="536"/>
    </location>
</feature>
<reference key="1">
    <citation type="journal article" date="1998" name="Nature">
        <title>Deciphering the biology of Mycobacterium tuberculosis from the complete genome sequence.</title>
        <authorList>
            <person name="Cole S.T."/>
            <person name="Brosch R."/>
            <person name="Parkhill J."/>
            <person name="Garnier T."/>
            <person name="Churcher C.M."/>
            <person name="Harris D.E."/>
            <person name="Gordon S.V."/>
            <person name="Eiglmeier K."/>
            <person name="Gas S."/>
            <person name="Barry C.E. III"/>
            <person name="Tekaia F."/>
            <person name="Badcock K."/>
            <person name="Basham D."/>
            <person name="Brown D."/>
            <person name="Chillingworth T."/>
            <person name="Connor R."/>
            <person name="Davies R.M."/>
            <person name="Devlin K."/>
            <person name="Feltwell T."/>
            <person name="Gentles S."/>
            <person name="Hamlin N."/>
            <person name="Holroyd S."/>
            <person name="Hornsby T."/>
            <person name="Jagels K."/>
            <person name="Krogh A."/>
            <person name="McLean J."/>
            <person name="Moule S."/>
            <person name="Murphy L.D."/>
            <person name="Oliver S."/>
            <person name="Osborne J."/>
            <person name="Quail M.A."/>
            <person name="Rajandream M.A."/>
            <person name="Rogers J."/>
            <person name="Rutter S."/>
            <person name="Seeger K."/>
            <person name="Skelton S."/>
            <person name="Squares S."/>
            <person name="Squares R."/>
            <person name="Sulston J.E."/>
            <person name="Taylor K."/>
            <person name="Whitehead S."/>
            <person name="Barrell B.G."/>
        </authorList>
    </citation>
    <scope>NUCLEOTIDE SEQUENCE [LARGE SCALE GENOMIC DNA]</scope>
    <source>
        <strain>ATCC 25618 / H37Rv</strain>
    </source>
</reference>
<reference key="2">
    <citation type="journal article" date="2008" name="BMC Syst. Biol.">
        <title>targetTB: a target identification pipeline for Mycobacterium tuberculosis through an interactome, reactome and genome-scale structural analysis.</title>
        <authorList>
            <person name="Raman K."/>
            <person name="Yeturu K."/>
            <person name="Chandra N."/>
        </authorList>
    </citation>
    <scope>IDENTIFICATION AS A DRUG TARGET [LARGE SCALE ANALYSIS]</scope>
</reference>
<reference key="3">
    <citation type="journal article" date="2011" name="Mol. Cell. Proteomics">
        <title>Proteogenomic analysis of Mycobacterium tuberculosis by high resolution mass spectrometry.</title>
        <authorList>
            <person name="Kelkar D.S."/>
            <person name="Kumar D."/>
            <person name="Kumar P."/>
            <person name="Balakrishnan L."/>
            <person name="Muthusamy B."/>
            <person name="Yadav A.K."/>
            <person name="Shrivastava P."/>
            <person name="Marimuthu A."/>
            <person name="Anand S."/>
            <person name="Sundaram H."/>
            <person name="Kingsbury R."/>
            <person name="Harsha H.C."/>
            <person name="Nair B."/>
            <person name="Prasad T.S."/>
            <person name="Chauhan D.S."/>
            <person name="Katoch K."/>
            <person name="Katoch V.M."/>
            <person name="Kumar P."/>
            <person name="Chaerkady R."/>
            <person name="Ramachandran S."/>
            <person name="Dash D."/>
            <person name="Pandey A."/>
        </authorList>
    </citation>
    <scope>IDENTIFICATION BY MASS SPECTROMETRY [LARGE SCALE ANALYSIS]</scope>
    <source>
        <strain>ATCC 25618 / H37Rv</strain>
    </source>
</reference>
<reference key="4">
    <citation type="journal article" date="2013" name="Nat. Med.">
        <title>Discovery of Q203, a potent clinical candidate for the treatment of tuberculosis.</title>
        <authorList>
            <person name="Pethe K."/>
            <person name="Bifani P."/>
            <person name="Jang J."/>
            <person name="Kang S."/>
            <person name="Park S."/>
            <person name="Ahn S."/>
            <person name="Jiricek J."/>
            <person name="Jung J."/>
            <person name="Jeon H.K."/>
            <person name="Cechetto J."/>
            <person name="Christophe T."/>
            <person name="Lee H."/>
            <person name="Kempf M."/>
            <person name="Jackson M."/>
            <person name="Lenaerts A.J."/>
            <person name="Pham H."/>
            <person name="Jones V."/>
            <person name="Seo M.J."/>
            <person name="Kim Y.M."/>
            <person name="Seo M."/>
            <person name="Seo J.J."/>
            <person name="Park D."/>
            <person name="Ko Y."/>
            <person name="Choi I."/>
            <person name="Kim R."/>
            <person name="Kim S.Y."/>
            <person name="Lim S."/>
            <person name="Yim S.A."/>
            <person name="Nam J."/>
            <person name="Kang H."/>
            <person name="Kwon H."/>
            <person name="Oh C.T."/>
            <person name="Cho Y."/>
            <person name="Jang Y."/>
            <person name="Kim J."/>
            <person name="Chua A."/>
            <person name="Tan B.H."/>
            <person name="Nanjundappa M.B."/>
            <person name="Rao S.P."/>
            <person name="Barnes W.S."/>
            <person name="Wintjens R."/>
            <person name="Walker J.R."/>
            <person name="Alonso S."/>
            <person name="Lee S."/>
            <person name="Kim J."/>
            <person name="Oh S."/>
            <person name="Oh T."/>
            <person name="Nehrbass U."/>
            <person name="Han S.J."/>
            <person name="No Z."/>
            <person name="Lee J."/>
            <person name="Brodin P."/>
            <person name="Cho S.N."/>
            <person name="Nam K."/>
            <person name="Kim J."/>
        </authorList>
    </citation>
    <scope>FUNCTION</scope>
    <scope>ACTIVITY REGULATION</scope>
    <scope>MUTAGENESIS OF THR-313</scope>
    <source>
        <strain>H37Rv</strain>
    </source>
</reference>
<reference key="5">
    <citation type="journal article" date="2015" name="Nat. Commun.">
        <title>Lansoprazole is an antituberculous prodrug targeting cytochrome bc1.</title>
        <authorList>
            <person name="Rybniker J."/>
            <person name="Vocat A."/>
            <person name="Sala C."/>
            <person name="Busso P."/>
            <person name="Pojer F."/>
            <person name="Benjak A."/>
            <person name="Cole S.T."/>
        </authorList>
    </citation>
    <scope>FUNCTION</scope>
    <scope>ACTIVITY REGULATION</scope>
    <scope>MUTAGENESIS OF LEU-176 AND THR-313</scope>
    <scope>3D-STRUCTURE MODELING</scope>
    <source>
        <strain>H37Rv</strain>
    </source>
</reference>
<comment type="function">
    <text evidence="7 8 9">Cytochrome b subunit of the cytochrome bc1 complex, an essential component of the respiratory electron transport chain required for ATP synthesis. The bc1 complex catalyzes the oxidation of ubiquinol and the reduction of cytochrome c in the respiratory chain. The bc1 complex operates through a Q-cycle mechanism that couples electron transfer to generation of the proton gradient that drives ATP synthesis. The cytochrome b subunit contains two ubiquinol reactive sites: the oxidation (QP) site and the reduction (QN) site.</text>
</comment>
<comment type="catalytic activity">
    <reaction evidence="7">
        <text>a quinol + 2 Fe(III)-[cytochrome c](out) = a quinone + 2 Fe(II)-[cytochrome c](out) + 2 H(+)(out)</text>
        <dbReference type="Rhea" id="RHEA:11484"/>
        <dbReference type="Rhea" id="RHEA-COMP:10350"/>
        <dbReference type="Rhea" id="RHEA-COMP:14399"/>
        <dbReference type="ChEBI" id="CHEBI:15378"/>
        <dbReference type="ChEBI" id="CHEBI:24646"/>
        <dbReference type="ChEBI" id="CHEBI:29033"/>
        <dbReference type="ChEBI" id="CHEBI:29034"/>
        <dbReference type="ChEBI" id="CHEBI:132124"/>
        <dbReference type="EC" id="7.1.1.8"/>
    </reaction>
</comment>
<comment type="cofactor">
    <cofactor evidence="1">
        <name>heme</name>
        <dbReference type="ChEBI" id="CHEBI:30413"/>
    </cofactor>
    <text evidence="1">Binds 2 heme groups non-covalently per subunit.</text>
</comment>
<comment type="activity regulation">
    <text evidence="4 5">Inhibited by the anti-tuberculous drug Q203, an optimized imidazopyridine amide (IPA) compound. Q203 triggers a rapid ATP depletion in M.tuberculosis grown under an aerobic or anaerobic atmosphere (PubMed:23913123). Also inhibited by LPZS (lansoprazole sulfide), a metabolite of LPZ (lansoprazole) generated by intracellular sulfoxide reduction into the host cytoplasm; LPZS is a potent anti-mycobacterial agent that inhibits growth of intracellular M.tuberculosis with good activity against drug-resistant isolates. The inhibition of QcrB by LPZS leads to disruption of the mycobacterial respiratory chain and massive and rapid ATP depletion (PubMed:26158909). Both compounds target the same active site in QcrB (the ubiquinol oxidation QP site), but they have distinct drug-binding mechanisms (PubMed:26158909).</text>
</comment>
<comment type="subunit">
    <text evidence="7">The cytochrome bc1 complex is composed of a cytochrome b (QcrB), the Rieske iron-sulfur protein (QcrA) and a diheme cytochrome c (QcrC) subunit.</text>
</comment>
<comment type="subcellular location">
    <subcellularLocation>
        <location evidence="2">Cell membrane</location>
        <topology evidence="2">Multi-pass membrane protein</topology>
    </subcellularLocation>
</comment>
<comment type="miscellaneous">
    <text evidence="6">Was identified as a high-confidence drug target.</text>
</comment>
<comment type="similarity">
    <text evidence="3">Belongs to the cytochrome b family.</text>
</comment>
<organism>
    <name type="scientific">Mycobacterium tuberculosis (strain ATCC 25618 / H37Rv)</name>
    <dbReference type="NCBI Taxonomy" id="83332"/>
    <lineage>
        <taxon>Bacteria</taxon>
        <taxon>Bacillati</taxon>
        <taxon>Actinomycetota</taxon>
        <taxon>Actinomycetes</taxon>
        <taxon>Mycobacteriales</taxon>
        <taxon>Mycobacteriaceae</taxon>
        <taxon>Mycobacterium</taxon>
        <taxon>Mycobacterium tuberculosis complex</taxon>
    </lineage>
</organism>
<name>QCRB_MYCTU</name>
<keyword id="KW-0002">3D-structure</keyword>
<keyword id="KW-1003">Cell membrane</keyword>
<keyword id="KW-0249">Electron transport</keyword>
<keyword id="KW-0349">Heme</keyword>
<keyword id="KW-0408">Iron</keyword>
<keyword id="KW-0472">Membrane</keyword>
<keyword id="KW-0479">Metal-binding</keyword>
<keyword id="KW-1185">Reference proteome</keyword>
<keyword id="KW-0679">Respiratory chain</keyword>
<keyword id="KW-1278">Translocase</keyword>
<keyword id="KW-0812">Transmembrane</keyword>
<keyword id="KW-1133">Transmembrane helix</keyword>
<keyword id="KW-0813">Transport</keyword>
<proteinExistence type="evidence at protein level"/>
<sequence>MSPKLSPPNIGEVLARQAEDIDTRYHPSAALRRQLNKVFPTHWSFLLGEIALYSFVVLLITGVYLTLFFDPSMVDVTYNGVYQPLRGVEMSRAYQSALDISFEVRGGLFVRQIHHWAALMFAAAIMVHLARIFFTGAFRRPRETNWVIGSLLLILAMFEGYFGYSLPDDLLSGLGLRAALSSITLGMPVIGTWLHWALFGGDFPGTILIPRLYALHILLLPGIILALIGLHLALVWFQKHTQFPGPGRTEHNVVGVRVMPVFAFKSGAFFAAIVGVLGLMGGLLQINPIWNLGPYKPSQVSAGSQPDFYMMWTEGLARIWPPWEFYFWHHTIPAPVWVAVIMGLVFVLLPAYPFLEKRFTGDYAHHNLLQRPRDVPVRTAIGAMAIAFYMVLTLAAMNDIIALKFHISLNATTWIGRIGMVILPPFVYFITYRWCIGLQRSDRSVLEHGVETGIIKRLPHGAYIELHQPLGPVDEHGHPIPLQYQGAPLPKRMNKLGSAGSPGSGSFLFADSAAEDAALREAGHAAEQRALAALREHQDSIMGSPDGEH</sequence>
<evidence type="ECO:0000250" key="1">
    <source>
        <dbReference type="UniProtKB" id="P00163"/>
    </source>
</evidence>
<evidence type="ECO:0000255" key="2"/>
<evidence type="ECO:0000255" key="3">
    <source>
        <dbReference type="PROSITE-ProRule" id="PRU00968"/>
    </source>
</evidence>
<evidence type="ECO:0000269" key="4">
    <source>
    </source>
</evidence>
<evidence type="ECO:0000269" key="5">
    <source>
    </source>
</evidence>
<evidence type="ECO:0000303" key="6">
    <source>
    </source>
</evidence>
<evidence type="ECO:0000305" key="7"/>
<evidence type="ECO:0000305" key="8">
    <source>
    </source>
</evidence>
<evidence type="ECO:0000305" key="9">
    <source>
    </source>
</evidence>
<evidence type="ECO:0007829" key="10">
    <source>
        <dbReference type="PDB" id="7E1V"/>
    </source>
</evidence>
<evidence type="ECO:0007829" key="11">
    <source>
        <dbReference type="PDB" id="7E1W"/>
    </source>
</evidence>
<evidence type="ECO:0007829" key="12">
    <source>
        <dbReference type="PDB" id="8HCR"/>
    </source>
</evidence>